<keyword id="KW-0963">Cytoplasm</keyword>
<keyword id="KW-0342">GTP-binding</keyword>
<keyword id="KW-0378">Hydrolase</keyword>
<keyword id="KW-0460">Magnesium</keyword>
<keyword id="KW-0479">Metal-binding</keyword>
<keyword id="KW-0547">Nucleotide-binding</keyword>
<keyword id="KW-0630">Potassium</keyword>
<keyword id="KW-0819">tRNA processing</keyword>
<comment type="function">
    <text evidence="1">Exhibits a very high intrinsic GTPase hydrolysis rate. Involved in the addition of a carboxymethylaminomethyl (cmnm) group at the wobble position (U34) of certain tRNAs, forming tRNA-cmnm(5)s(2)U34.</text>
</comment>
<comment type="cofactor">
    <cofactor evidence="1">
        <name>K(+)</name>
        <dbReference type="ChEBI" id="CHEBI:29103"/>
    </cofactor>
    <text evidence="1">Binds 1 potassium ion per subunit.</text>
</comment>
<comment type="subunit">
    <text evidence="1">Homodimer. Heterotetramer of two MnmE and two MnmG subunits.</text>
</comment>
<comment type="subcellular location">
    <subcellularLocation>
        <location evidence="1">Cytoplasm</location>
    </subcellularLocation>
</comment>
<comment type="similarity">
    <text evidence="1">Belongs to the TRAFAC class TrmE-Era-EngA-EngB-Septin-like GTPase superfamily. TrmE GTPase family.</text>
</comment>
<name>MNME_BUCAP</name>
<gene>
    <name evidence="1" type="primary">mnmE</name>
    <name evidence="1" type="synonym">thdF</name>
    <name evidence="1" type="synonym">trmE</name>
    <name type="ordered locus">BUsg_017</name>
</gene>
<proteinExistence type="inferred from homology"/>
<protein>
    <recommendedName>
        <fullName evidence="1">tRNA modification GTPase MnmE</fullName>
        <ecNumber evidence="1">3.6.-.-</ecNumber>
    </recommendedName>
</protein>
<dbReference type="EC" id="3.6.-.-" evidence="1"/>
<dbReference type="EMBL" id="D85628">
    <property type="protein sequence ID" value="BAA12845.1"/>
    <property type="molecule type" value="Genomic_DNA"/>
</dbReference>
<dbReference type="EMBL" id="AF008210">
    <property type="protein sequence ID" value="AAC38101.1"/>
    <property type="molecule type" value="Genomic_DNA"/>
</dbReference>
<dbReference type="EMBL" id="AE013218">
    <property type="protein sequence ID" value="AAM67589.1"/>
    <property type="molecule type" value="Genomic_DNA"/>
</dbReference>
<dbReference type="RefSeq" id="WP_011053555.1">
    <property type="nucleotide sequence ID" value="NC_004061.1"/>
</dbReference>
<dbReference type="SMR" id="Q44633"/>
<dbReference type="STRING" id="198804.BUsg_017"/>
<dbReference type="GeneID" id="93003479"/>
<dbReference type="KEGG" id="bas:BUsg_017"/>
<dbReference type="eggNOG" id="COG0486">
    <property type="taxonomic scope" value="Bacteria"/>
</dbReference>
<dbReference type="HOGENOM" id="CLU_019624_4_1_6"/>
<dbReference type="Proteomes" id="UP000000416">
    <property type="component" value="Chromosome"/>
</dbReference>
<dbReference type="GO" id="GO:0005829">
    <property type="term" value="C:cytosol"/>
    <property type="evidence" value="ECO:0007669"/>
    <property type="project" value="TreeGrafter"/>
</dbReference>
<dbReference type="GO" id="GO:0005525">
    <property type="term" value="F:GTP binding"/>
    <property type="evidence" value="ECO:0007669"/>
    <property type="project" value="UniProtKB-UniRule"/>
</dbReference>
<dbReference type="GO" id="GO:0003924">
    <property type="term" value="F:GTPase activity"/>
    <property type="evidence" value="ECO:0007669"/>
    <property type="project" value="UniProtKB-UniRule"/>
</dbReference>
<dbReference type="GO" id="GO:0046872">
    <property type="term" value="F:metal ion binding"/>
    <property type="evidence" value="ECO:0007669"/>
    <property type="project" value="UniProtKB-KW"/>
</dbReference>
<dbReference type="GO" id="GO:0030488">
    <property type="term" value="P:tRNA methylation"/>
    <property type="evidence" value="ECO:0007669"/>
    <property type="project" value="TreeGrafter"/>
</dbReference>
<dbReference type="GO" id="GO:0002098">
    <property type="term" value="P:tRNA wobble uridine modification"/>
    <property type="evidence" value="ECO:0007669"/>
    <property type="project" value="TreeGrafter"/>
</dbReference>
<dbReference type="CDD" id="cd04164">
    <property type="entry name" value="trmE"/>
    <property type="match status" value="1"/>
</dbReference>
<dbReference type="CDD" id="cd14858">
    <property type="entry name" value="TrmE_N"/>
    <property type="match status" value="1"/>
</dbReference>
<dbReference type="FunFam" id="3.40.50.300:FF:001376">
    <property type="entry name" value="tRNA modification GTPase MnmE"/>
    <property type="match status" value="1"/>
</dbReference>
<dbReference type="Gene3D" id="3.40.50.300">
    <property type="entry name" value="P-loop containing nucleotide triphosphate hydrolases"/>
    <property type="match status" value="1"/>
</dbReference>
<dbReference type="Gene3D" id="3.30.1360.120">
    <property type="entry name" value="Probable tRNA modification gtpase trme, domain 1"/>
    <property type="match status" value="1"/>
</dbReference>
<dbReference type="Gene3D" id="1.20.120.430">
    <property type="entry name" value="tRNA modification GTPase MnmE domain 2"/>
    <property type="match status" value="1"/>
</dbReference>
<dbReference type="HAMAP" id="MF_00379">
    <property type="entry name" value="GTPase_MnmE"/>
    <property type="match status" value="1"/>
</dbReference>
<dbReference type="InterPro" id="IPR031168">
    <property type="entry name" value="G_TrmE"/>
</dbReference>
<dbReference type="InterPro" id="IPR006073">
    <property type="entry name" value="GTP-bd"/>
</dbReference>
<dbReference type="InterPro" id="IPR018948">
    <property type="entry name" value="GTP-bd_TrmE_N"/>
</dbReference>
<dbReference type="InterPro" id="IPR004520">
    <property type="entry name" value="GTPase_MnmE"/>
</dbReference>
<dbReference type="InterPro" id="IPR027368">
    <property type="entry name" value="MnmE_dom2"/>
</dbReference>
<dbReference type="InterPro" id="IPR025867">
    <property type="entry name" value="MnmE_helical"/>
</dbReference>
<dbReference type="InterPro" id="IPR027417">
    <property type="entry name" value="P-loop_NTPase"/>
</dbReference>
<dbReference type="InterPro" id="IPR005225">
    <property type="entry name" value="Small_GTP-bd"/>
</dbReference>
<dbReference type="InterPro" id="IPR027266">
    <property type="entry name" value="TrmE/GcvT_dom1"/>
</dbReference>
<dbReference type="NCBIfam" id="TIGR00450">
    <property type="entry name" value="mnmE_trmE_thdF"/>
    <property type="match status" value="1"/>
</dbReference>
<dbReference type="NCBIfam" id="NF003661">
    <property type="entry name" value="PRK05291.1-3"/>
    <property type="match status" value="1"/>
</dbReference>
<dbReference type="NCBIfam" id="TIGR00231">
    <property type="entry name" value="small_GTP"/>
    <property type="match status" value="1"/>
</dbReference>
<dbReference type="PANTHER" id="PTHR42714">
    <property type="entry name" value="TRNA MODIFICATION GTPASE GTPBP3"/>
    <property type="match status" value="1"/>
</dbReference>
<dbReference type="PANTHER" id="PTHR42714:SF2">
    <property type="entry name" value="TRNA MODIFICATION GTPASE GTPBP3, MITOCHONDRIAL"/>
    <property type="match status" value="1"/>
</dbReference>
<dbReference type="Pfam" id="PF01926">
    <property type="entry name" value="MMR_HSR1"/>
    <property type="match status" value="1"/>
</dbReference>
<dbReference type="Pfam" id="PF12631">
    <property type="entry name" value="MnmE_helical"/>
    <property type="match status" value="1"/>
</dbReference>
<dbReference type="Pfam" id="PF10396">
    <property type="entry name" value="TrmE_N"/>
    <property type="match status" value="1"/>
</dbReference>
<dbReference type="SUPFAM" id="SSF52540">
    <property type="entry name" value="P-loop containing nucleoside triphosphate hydrolases"/>
    <property type="match status" value="1"/>
</dbReference>
<dbReference type="PROSITE" id="PS51709">
    <property type="entry name" value="G_TRME"/>
    <property type="match status" value="1"/>
</dbReference>
<organism>
    <name type="scientific">Buchnera aphidicola subsp. Schizaphis graminum (strain Sg)</name>
    <dbReference type="NCBI Taxonomy" id="198804"/>
    <lineage>
        <taxon>Bacteria</taxon>
        <taxon>Pseudomonadati</taxon>
        <taxon>Pseudomonadota</taxon>
        <taxon>Gammaproteobacteria</taxon>
        <taxon>Enterobacterales</taxon>
        <taxon>Erwiniaceae</taxon>
        <taxon>Buchnera</taxon>
    </lineage>
</organism>
<sequence>MIRNDTIIAQVTCPGKSAVGILRVSGIHANQVAFAVLGKIPKPRFATYSKFFDESKKVLDEGISLWFPAPFSLTGEDVLELQGHGNPFIMDLLIKRILCLKNIKIRIAQPGEFCQRAFLNGKIDLIQAEAIDDLINSETESVVRASLNSLHGNFSFYIQKIIKKLIEFRTNIEASIDFSEENIDFDFNIFIMSNFEKLNDKFLKIKNIVSEGSLIREAKRIVIVGPPNAGKSSLLNVLSCRDRAIVTDLPGTTRDVLYENINIHGISCEIIDTAGLRETEDKIEKIGIQRSWEMIKNSDHVLYVMDKTISLEDQKKTSIQFMKQISSYNIQEVTFVLNKNDLVEDFCGITKIENLLFISISALTGQGIDILKKHLSNRQKDKSQEGLFIARRRHIHQIDLSYCELLKAQKNWLKYKNIELLAESLNIINKLLGEITGEFTSSDLLKRIFSTFCIGK</sequence>
<reference key="1">
    <citation type="submission" date="1996-06" db="EMBL/GenBank/DDBJ databases">
        <title>The nucleotide sequence of 60K, tdhF, groES and groEL genes of Buchnera aphidicola.</title>
        <authorList>
            <person name="Anwarul H.K."/>
            <person name="Moriya S."/>
            <person name="Baumann P."/>
            <person name="Yoshikawa H."/>
            <person name="Ogasawara N."/>
        </authorList>
    </citation>
    <scope>NUCLEOTIDE SEQUENCE [GENOMIC DNA]</scope>
</reference>
<reference key="2">
    <citation type="journal article" date="1998" name="Curr. Microbiol.">
        <title>Sequence analysis of a 34.7-kb DNA segment from the genome of Buchnera aphidicola (endosymbiont of aphids) containing groEL, dnaA, the atp operon, gidA, and rho.</title>
        <authorList>
            <person name="Clark M.A."/>
            <person name="Baumann L."/>
            <person name="Baumann P."/>
        </authorList>
    </citation>
    <scope>NUCLEOTIDE SEQUENCE [GENOMIC DNA]</scope>
</reference>
<reference key="3">
    <citation type="journal article" date="2002" name="Science">
        <title>50 million years of genomic stasis in endosymbiotic bacteria.</title>
        <authorList>
            <person name="Tamas I."/>
            <person name="Klasson L."/>
            <person name="Canbaeck B."/>
            <person name="Naeslund A.K."/>
            <person name="Eriksson A.-S."/>
            <person name="Wernegreen J.J."/>
            <person name="Sandstroem J.P."/>
            <person name="Moran N.A."/>
            <person name="Andersson S.G.E."/>
        </authorList>
    </citation>
    <scope>NUCLEOTIDE SEQUENCE [LARGE SCALE GENOMIC DNA]</scope>
    <source>
        <strain>Sg</strain>
    </source>
</reference>
<feature type="chain" id="PRO_0000188857" description="tRNA modification GTPase MnmE">
    <location>
        <begin position="1"/>
        <end position="456"/>
    </location>
</feature>
<feature type="domain" description="TrmE-type G">
    <location>
        <begin position="218"/>
        <end position="380"/>
    </location>
</feature>
<feature type="binding site" evidence="1">
    <location>
        <position position="23"/>
    </location>
    <ligand>
        <name>(6S)-5-formyl-5,6,7,8-tetrahydrofolate</name>
        <dbReference type="ChEBI" id="CHEBI:57457"/>
    </ligand>
</feature>
<feature type="binding site" evidence="1">
    <location>
        <position position="80"/>
    </location>
    <ligand>
        <name>(6S)-5-formyl-5,6,7,8-tetrahydrofolate</name>
        <dbReference type="ChEBI" id="CHEBI:57457"/>
    </ligand>
</feature>
<feature type="binding site" evidence="1">
    <location>
        <position position="122"/>
    </location>
    <ligand>
        <name>(6S)-5-formyl-5,6,7,8-tetrahydrofolate</name>
        <dbReference type="ChEBI" id="CHEBI:57457"/>
    </ligand>
</feature>
<feature type="binding site" evidence="1">
    <location>
        <begin position="228"/>
        <end position="233"/>
    </location>
    <ligand>
        <name>GTP</name>
        <dbReference type="ChEBI" id="CHEBI:37565"/>
    </ligand>
</feature>
<feature type="binding site" evidence="1">
    <location>
        <position position="228"/>
    </location>
    <ligand>
        <name>K(+)</name>
        <dbReference type="ChEBI" id="CHEBI:29103"/>
    </ligand>
</feature>
<feature type="binding site" evidence="1">
    <location>
        <position position="232"/>
    </location>
    <ligand>
        <name>Mg(2+)</name>
        <dbReference type="ChEBI" id="CHEBI:18420"/>
    </ligand>
</feature>
<feature type="binding site" evidence="1">
    <location>
        <begin position="247"/>
        <end position="253"/>
    </location>
    <ligand>
        <name>GTP</name>
        <dbReference type="ChEBI" id="CHEBI:37565"/>
    </ligand>
</feature>
<feature type="binding site" evidence="1">
    <location>
        <position position="247"/>
    </location>
    <ligand>
        <name>K(+)</name>
        <dbReference type="ChEBI" id="CHEBI:29103"/>
    </ligand>
</feature>
<feature type="binding site" evidence="1">
    <location>
        <position position="249"/>
    </location>
    <ligand>
        <name>K(+)</name>
        <dbReference type="ChEBI" id="CHEBI:29103"/>
    </ligand>
</feature>
<feature type="binding site" evidence="1">
    <location>
        <position position="252"/>
    </location>
    <ligand>
        <name>K(+)</name>
        <dbReference type="ChEBI" id="CHEBI:29103"/>
    </ligand>
</feature>
<feature type="binding site" evidence="1">
    <location>
        <position position="253"/>
    </location>
    <ligand>
        <name>Mg(2+)</name>
        <dbReference type="ChEBI" id="CHEBI:18420"/>
    </ligand>
</feature>
<feature type="binding site" evidence="1">
    <location>
        <begin position="272"/>
        <end position="275"/>
    </location>
    <ligand>
        <name>GTP</name>
        <dbReference type="ChEBI" id="CHEBI:37565"/>
    </ligand>
</feature>
<feature type="binding site" evidence="1">
    <location>
        <position position="456"/>
    </location>
    <ligand>
        <name>(6S)-5-formyl-5,6,7,8-tetrahydrofolate</name>
        <dbReference type="ChEBI" id="CHEBI:57457"/>
    </ligand>
</feature>
<evidence type="ECO:0000255" key="1">
    <source>
        <dbReference type="HAMAP-Rule" id="MF_00379"/>
    </source>
</evidence>
<accession>Q44633</accession>